<comment type="function">
    <text evidence="1">Attaches a formyl group to the free amino group of methionyl-tRNA(fMet). The formyl group appears to play a dual role in the initiator identity of N-formylmethionyl-tRNA by promoting its recognition by IF2 and preventing the misappropriation of this tRNA by the elongation apparatus.</text>
</comment>
<comment type="catalytic activity">
    <reaction evidence="1">
        <text>L-methionyl-tRNA(fMet) + (6R)-10-formyltetrahydrofolate = N-formyl-L-methionyl-tRNA(fMet) + (6S)-5,6,7,8-tetrahydrofolate + H(+)</text>
        <dbReference type="Rhea" id="RHEA:24380"/>
        <dbReference type="Rhea" id="RHEA-COMP:9952"/>
        <dbReference type="Rhea" id="RHEA-COMP:9953"/>
        <dbReference type="ChEBI" id="CHEBI:15378"/>
        <dbReference type="ChEBI" id="CHEBI:57453"/>
        <dbReference type="ChEBI" id="CHEBI:78530"/>
        <dbReference type="ChEBI" id="CHEBI:78844"/>
        <dbReference type="ChEBI" id="CHEBI:195366"/>
        <dbReference type="EC" id="2.1.2.9"/>
    </reaction>
</comment>
<comment type="similarity">
    <text evidence="1">Belongs to the Fmt family.</text>
</comment>
<proteinExistence type="inferred from homology"/>
<reference key="1">
    <citation type="journal article" date="2002" name="Nature">
        <title>Complete genome sequence of the model actinomycete Streptomyces coelicolor A3(2).</title>
        <authorList>
            <person name="Bentley S.D."/>
            <person name="Chater K.F."/>
            <person name="Cerdeno-Tarraga A.-M."/>
            <person name="Challis G.L."/>
            <person name="Thomson N.R."/>
            <person name="James K.D."/>
            <person name="Harris D.E."/>
            <person name="Quail M.A."/>
            <person name="Kieser H."/>
            <person name="Harper D."/>
            <person name="Bateman A."/>
            <person name="Brown S."/>
            <person name="Chandra G."/>
            <person name="Chen C.W."/>
            <person name="Collins M."/>
            <person name="Cronin A."/>
            <person name="Fraser A."/>
            <person name="Goble A."/>
            <person name="Hidalgo J."/>
            <person name="Hornsby T."/>
            <person name="Howarth S."/>
            <person name="Huang C.-H."/>
            <person name="Kieser T."/>
            <person name="Larke L."/>
            <person name="Murphy L.D."/>
            <person name="Oliver K."/>
            <person name="O'Neil S."/>
            <person name="Rabbinowitsch E."/>
            <person name="Rajandream M.A."/>
            <person name="Rutherford K.M."/>
            <person name="Rutter S."/>
            <person name="Seeger K."/>
            <person name="Saunders D."/>
            <person name="Sharp S."/>
            <person name="Squares R."/>
            <person name="Squares S."/>
            <person name="Taylor K."/>
            <person name="Warren T."/>
            <person name="Wietzorrek A."/>
            <person name="Woodward J.R."/>
            <person name="Barrell B.G."/>
            <person name="Parkhill J."/>
            <person name="Hopwood D.A."/>
        </authorList>
    </citation>
    <scope>NUCLEOTIDE SEQUENCE [LARGE SCALE GENOMIC DNA]</scope>
    <source>
        <strain>ATCC BAA-471 / A3(2) / M145</strain>
    </source>
</reference>
<feature type="chain" id="PRO_0000083056" description="Methionyl-tRNA formyltransferase">
    <location>
        <begin position="1"/>
        <end position="310"/>
    </location>
</feature>
<feature type="binding site" evidence="1">
    <location>
        <begin position="110"/>
        <end position="113"/>
    </location>
    <ligand>
        <name>(6S)-5,6,7,8-tetrahydrofolate</name>
        <dbReference type="ChEBI" id="CHEBI:57453"/>
    </ligand>
</feature>
<evidence type="ECO:0000255" key="1">
    <source>
        <dbReference type="HAMAP-Rule" id="MF_00182"/>
    </source>
</evidence>
<accession>Q9L0Y6</accession>
<protein>
    <recommendedName>
        <fullName evidence="1">Methionyl-tRNA formyltransferase</fullName>
        <ecNumber evidence="1">2.1.2.9</ecNumber>
    </recommendedName>
</protein>
<organism>
    <name type="scientific">Streptomyces coelicolor (strain ATCC BAA-471 / A3(2) / M145)</name>
    <dbReference type="NCBI Taxonomy" id="100226"/>
    <lineage>
        <taxon>Bacteria</taxon>
        <taxon>Bacillati</taxon>
        <taxon>Actinomycetota</taxon>
        <taxon>Actinomycetes</taxon>
        <taxon>Kitasatosporales</taxon>
        <taxon>Streptomycetaceae</taxon>
        <taxon>Streptomyces</taxon>
        <taxon>Streptomyces albidoflavus group</taxon>
    </lineage>
</organism>
<sequence>MKLVFAGTPEVAVPALDALIASGRHEVAAVVTRPDAPAGRGRRLVASPVAERAEEAGIEVLKPAKPRDPDFLERLREIAPDCCPVVAYGALLPRVALDVPARGWVNLHFSLLPAWRGAAPVQHALMAGDEITGASTFLIEEGLDSGPVYGTVTETVRPTDTSGDLLTRLAFAGAGLLAATMDGIEDGSLEAVPQPAEGVTLAPKITVEDARVDWTAPALRVDRVVRGCTPAPGAWTTFRGERLKLVQAVPLPDRSDLAPGQLAAGKNNVYVGTGSHAVELLWVQAQGKKPMRAADWARGARITEGERVGD</sequence>
<gene>
    <name evidence="1" type="primary">fmt</name>
    <name type="ordered locus">SCO1473</name>
    <name type="ORF">SCL6.30c</name>
</gene>
<name>FMT_STRCO</name>
<keyword id="KW-0648">Protein biosynthesis</keyword>
<keyword id="KW-1185">Reference proteome</keyword>
<keyword id="KW-0808">Transferase</keyword>
<dbReference type="EC" id="2.1.2.9" evidence="1"/>
<dbReference type="EMBL" id="AL939109">
    <property type="protein sequence ID" value="CAB76895.1"/>
    <property type="molecule type" value="Genomic_DNA"/>
</dbReference>
<dbReference type="RefSeq" id="NP_625754.1">
    <property type="nucleotide sequence ID" value="NC_003888.3"/>
</dbReference>
<dbReference type="RefSeq" id="WP_011027805.1">
    <property type="nucleotide sequence ID" value="NZ_VNID01000021.1"/>
</dbReference>
<dbReference type="SMR" id="Q9L0Y6"/>
<dbReference type="FunCoup" id="Q9L0Y6">
    <property type="interactions" value="314"/>
</dbReference>
<dbReference type="STRING" id="100226.gene:17759059"/>
<dbReference type="PaxDb" id="100226-SCO1473"/>
<dbReference type="KEGG" id="sco:SCO1473"/>
<dbReference type="PATRIC" id="fig|100226.15.peg.1482"/>
<dbReference type="eggNOG" id="COG0223">
    <property type="taxonomic scope" value="Bacteria"/>
</dbReference>
<dbReference type="HOGENOM" id="CLU_033347_1_0_11"/>
<dbReference type="InParanoid" id="Q9L0Y6"/>
<dbReference type="OrthoDB" id="9802815at2"/>
<dbReference type="PhylomeDB" id="Q9L0Y6"/>
<dbReference type="Proteomes" id="UP000001973">
    <property type="component" value="Chromosome"/>
</dbReference>
<dbReference type="GO" id="GO:0005829">
    <property type="term" value="C:cytosol"/>
    <property type="evidence" value="ECO:0000318"/>
    <property type="project" value="GO_Central"/>
</dbReference>
<dbReference type="GO" id="GO:0004479">
    <property type="term" value="F:methionyl-tRNA formyltransferase activity"/>
    <property type="evidence" value="ECO:0000318"/>
    <property type="project" value="GO_Central"/>
</dbReference>
<dbReference type="GO" id="GO:0071951">
    <property type="term" value="P:conversion of methionyl-tRNA to N-formyl-methionyl-tRNA"/>
    <property type="evidence" value="ECO:0000318"/>
    <property type="project" value="GO_Central"/>
</dbReference>
<dbReference type="CDD" id="cd08646">
    <property type="entry name" value="FMT_core_Met-tRNA-FMT_N"/>
    <property type="match status" value="1"/>
</dbReference>
<dbReference type="CDD" id="cd08704">
    <property type="entry name" value="Met_tRNA_FMT_C"/>
    <property type="match status" value="1"/>
</dbReference>
<dbReference type="FunFam" id="3.40.50.12230:FF:000001">
    <property type="entry name" value="Methionyl-tRNA formyltransferase"/>
    <property type="match status" value="1"/>
</dbReference>
<dbReference type="Gene3D" id="3.40.50.12230">
    <property type="match status" value="1"/>
</dbReference>
<dbReference type="HAMAP" id="MF_00182">
    <property type="entry name" value="Formyl_trans"/>
    <property type="match status" value="1"/>
</dbReference>
<dbReference type="InterPro" id="IPR005794">
    <property type="entry name" value="Fmt"/>
</dbReference>
<dbReference type="InterPro" id="IPR005793">
    <property type="entry name" value="Formyl_trans_C"/>
</dbReference>
<dbReference type="InterPro" id="IPR002376">
    <property type="entry name" value="Formyl_transf_N"/>
</dbReference>
<dbReference type="InterPro" id="IPR036477">
    <property type="entry name" value="Formyl_transf_N_sf"/>
</dbReference>
<dbReference type="InterPro" id="IPR011034">
    <property type="entry name" value="Formyl_transferase-like_C_sf"/>
</dbReference>
<dbReference type="InterPro" id="IPR044135">
    <property type="entry name" value="Met-tRNA-FMT_C"/>
</dbReference>
<dbReference type="InterPro" id="IPR041711">
    <property type="entry name" value="Met-tRNA-FMT_N"/>
</dbReference>
<dbReference type="NCBIfam" id="TIGR00460">
    <property type="entry name" value="fmt"/>
    <property type="match status" value="1"/>
</dbReference>
<dbReference type="PANTHER" id="PTHR11138">
    <property type="entry name" value="METHIONYL-TRNA FORMYLTRANSFERASE"/>
    <property type="match status" value="1"/>
</dbReference>
<dbReference type="PANTHER" id="PTHR11138:SF5">
    <property type="entry name" value="METHIONYL-TRNA FORMYLTRANSFERASE, MITOCHONDRIAL"/>
    <property type="match status" value="1"/>
</dbReference>
<dbReference type="Pfam" id="PF02911">
    <property type="entry name" value="Formyl_trans_C"/>
    <property type="match status" value="1"/>
</dbReference>
<dbReference type="Pfam" id="PF00551">
    <property type="entry name" value="Formyl_trans_N"/>
    <property type="match status" value="1"/>
</dbReference>
<dbReference type="SUPFAM" id="SSF50486">
    <property type="entry name" value="FMT C-terminal domain-like"/>
    <property type="match status" value="1"/>
</dbReference>
<dbReference type="SUPFAM" id="SSF53328">
    <property type="entry name" value="Formyltransferase"/>
    <property type="match status" value="1"/>
</dbReference>